<keyword id="KW-0145">Chemotaxis</keyword>
<keyword id="KW-0202">Cytokine</keyword>
<keyword id="KW-1015">Disulfide bond</keyword>
<keyword id="KW-0395">Inflammatory response</keyword>
<keyword id="KW-1185">Reference proteome</keyword>
<keyword id="KW-0964">Secreted</keyword>
<keyword id="KW-0732">Signal</keyword>
<name>CCL25_PIG</name>
<dbReference type="EMBL" id="DQ061157">
    <property type="protein sequence ID" value="AAY67883.1"/>
    <property type="molecule type" value="mRNA"/>
</dbReference>
<dbReference type="RefSeq" id="NP_001020385.1">
    <property type="nucleotide sequence ID" value="NM_001025214.2"/>
</dbReference>
<dbReference type="RefSeq" id="NP_001422144.1">
    <property type="nucleotide sequence ID" value="NM_001435215.1"/>
</dbReference>
<dbReference type="RefSeq" id="XP_005661315.1">
    <property type="nucleotide sequence ID" value="XM_005661258.2"/>
</dbReference>
<dbReference type="RefSeq" id="XP_005661316.1">
    <property type="nucleotide sequence ID" value="XM_005661259.2"/>
</dbReference>
<dbReference type="SMR" id="Q4PR21"/>
<dbReference type="FunCoup" id="Q4PR21">
    <property type="interactions" value="151"/>
</dbReference>
<dbReference type="STRING" id="9823.ENSSSCP00000069059"/>
<dbReference type="PaxDb" id="9823-ENSSSCP00000014444"/>
<dbReference type="PeptideAtlas" id="Q4PR21"/>
<dbReference type="Ensembl" id="ENSSSCT00000047746.3">
    <property type="protein sequence ID" value="ENSSSCP00000045987.1"/>
    <property type="gene ID" value="ENSSSCG00000013593.6"/>
</dbReference>
<dbReference type="Ensembl" id="ENSSSCT00015089639.1">
    <property type="protein sequence ID" value="ENSSSCP00015036595.1"/>
    <property type="gene ID" value="ENSSSCG00015066934.1"/>
</dbReference>
<dbReference type="Ensembl" id="ENSSSCT00025021545.1">
    <property type="protein sequence ID" value="ENSSSCP00025008865.1"/>
    <property type="gene ID" value="ENSSSCG00025016057.1"/>
</dbReference>
<dbReference type="Ensembl" id="ENSSSCT00030010273.1">
    <property type="protein sequence ID" value="ENSSSCP00030004412.1"/>
    <property type="gene ID" value="ENSSSCG00030007657.1"/>
</dbReference>
<dbReference type="Ensembl" id="ENSSSCT00035105717.1">
    <property type="protein sequence ID" value="ENSSSCP00035045450.1"/>
    <property type="gene ID" value="ENSSSCG00035077557.1"/>
</dbReference>
<dbReference type="Ensembl" id="ENSSSCT00040005039.1">
    <property type="protein sequence ID" value="ENSSSCP00040001726.1"/>
    <property type="gene ID" value="ENSSSCG00040003963.1"/>
</dbReference>
<dbReference type="Ensembl" id="ENSSSCT00045058411.1">
    <property type="protein sequence ID" value="ENSSSCP00045040833.1"/>
    <property type="gene ID" value="ENSSSCG00045034044.1"/>
</dbReference>
<dbReference type="Ensembl" id="ENSSSCT00050068409.1">
    <property type="protein sequence ID" value="ENSSSCP00050029349.1"/>
    <property type="gene ID" value="ENSSSCG00050050284.1"/>
</dbReference>
<dbReference type="Ensembl" id="ENSSSCT00055024658.1">
    <property type="protein sequence ID" value="ENSSSCP00055019567.1"/>
    <property type="gene ID" value="ENSSSCG00055012540.1"/>
</dbReference>
<dbReference type="Ensembl" id="ENSSSCT00060024110.1">
    <property type="protein sequence ID" value="ENSSSCP00060010114.1"/>
    <property type="gene ID" value="ENSSSCG00060017990.1"/>
</dbReference>
<dbReference type="Ensembl" id="ENSSSCT00065077245.1">
    <property type="protein sequence ID" value="ENSSSCP00065033569.1"/>
    <property type="gene ID" value="ENSSSCG00065056447.1"/>
</dbReference>
<dbReference type="Ensembl" id="ENSSSCT00070051060.1">
    <property type="protein sequence ID" value="ENSSSCP00070043180.1"/>
    <property type="gene ID" value="ENSSSCG00070025542.1"/>
</dbReference>
<dbReference type="Ensembl" id="ENSSSCT00105073111">
    <property type="protein sequence ID" value="ENSSSCP00105051958"/>
    <property type="gene ID" value="ENSSSCG00105038213"/>
</dbReference>
<dbReference type="Ensembl" id="ENSSSCT00130070417">
    <property type="protein sequence ID" value="ENSSSCP00130050769"/>
    <property type="gene ID" value="ENSSSCG00130035948"/>
</dbReference>
<dbReference type="GeneID" id="448799"/>
<dbReference type="KEGG" id="ssc:448799"/>
<dbReference type="CTD" id="6370"/>
<dbReference type="VGNC" id="VGNC:99612">
    <property type="gene designation" value="CCL25"/>
</dbReference>
<dbReference type="eggNOG" id="ENOG502S8D1">
    <property type="taxonomic scope" value="Eukaryota"/>
</dbReference>
<dbReference type="GeneTree" id="ENSGT01100000263482"/>
<dbReference type="HOGENOM" id="CLU_113773_0_0_1"/>
<dbReference type="InParanoid" id="Q4PR21"/>
<dbReference type="OMA" id="RAWAYRI"/>
<dbReference type="OrthoDB" id="9930747at2759"/>
<dbReference type="TreeFam" id="TF353160"/>
<dbReference type="Reactome" id="R-SSC-380108">
    <property type="pathway name" value="Chemokine receptors bind chemokines"/>
</dbReference>
<dbReference type="Reactome" id="R-SSC-418594">
    <property type="pathway name" value="G alpha (i) signalling events"/>
</dbReference>
<dbReference type="Proteomes" id="UP000008227">
    <property type="component" value="Chromosome 2"/>
</dbReference>
<dbReference type="Proteomes" id="UP000314985">
    <property type="component" value="Chromosome 2"/>
</dbReference>
<dbReference type="Proteomes" id="UP000694570">
    <property type="component" value="Unplaced"/>
</dbReference>
<dbReference type="Proteomes" id="UP000694571">
    <property type="component" value="Unplaced"/>
</dbReference>
<dbReference type="Proteomes" id="UP000694720">
    <property type="component" value="Unplaced"/>
</dbReference>
<dbReference type="Proteomes" id="UP000694722">
    <property type="component" value="Unplaced"/>
</dbReference>
<dbReference type="Proteomes" id="UP000694723">
    <property type="component" value="Unplaced"/>
</dbReference>
<dbReference type="Proteomes" id="UP000694724">
    <property type="component" value="Unplaced"/>
</dbReference>
<dbReference type="Proteomes" id="UP000694725">
    <property type="component" value="Unplaced"/>
</dbReference>
<dbReference type="Proteomes" id="UP000694726">
    <property type="component" value="Unplaced"/>
</dbReference>
<dbReference type="Proteomes" id="UP000694727">
    <property type="component" value="Unplaced"/>
</dbReference>
<dbReference type="Proteomes" id="UP000694728">
    <property type="component" value="Unplaced"/>
</dbReference>
<dbReference type="Bgee" id="ENSSSCG00000013593">
    <property type="expression patterns" value="Expressed in duodenum and 42 other cell types or tissues"/>
</dbReference>
<dbReference type="ExpressionAtlas" id="Q4PR21">
    <property type="expression patterns" value="baseline"/>
</dbReference>
<dbReference type="GO" id="GO:0005615">
    <property type="term" value="C:extracellular space"/>
    <property type="evidence" value="ECO:0000318"/>
    <property type="project" value="GO_Central"/>
</dbReference>
<dbReference type="GO" id="GO:0048020">
    <property type="term" value="F:CCR chemokine receptor binding"/>
    <property type="evidence" value="ECO:0000318"/>
    <property type="project" value="GO_Central"/>
</dbReference>
<dbReference type="GO" id="GO:0031735">
    <property type="term" value="F:CCR10 chemokine receptor binding"/>
    <property type="evidence" value="ECO:0007669"/>
    <property type="project" value="Ensembl"/>
</dbReference>
<dbReference type="GO" id="GO:0008009">
    <property type="term" value="F:chemokine activity"/>
    <property type="evidence" value="ECO:0000318"/>
    <property type="project" value="GO_Central"/>
</dbReference>
<dbReference type="GO" id="GO:0042379">
    <property type="term" value="F:chemokine receptor binding"/>
    <property type="evidence" value="ECO:0000250"/>
    <property type="project" value="UniProtKB"/>
</dbReference>
<dbReference type="GO" id="GO:0061844">
    <property type="term" value="P:antimicrobial humoral immune response mediated by antimicrobial peptide"/>
    <property type="evidence" value="ECO:0000318"/>
    <property type="project" value="GO_Central"/>
</dbReference>
<dbReference type="GO" id="GO:0070098">
    <property type="term" value="P:chemokine-mediated signaling pathway"/>
    <property type="evidence" value="ECO:0000318"/>
    <property type="project" value="GO_Central"/>
</dbReference>
<dbReference type="GO" id="GO:0048245">
    <property type="term" value="P:eosinophil chemotaxis"/>
    <property type="evidence" value="ECO:0000318"/>
    <property type="project" value="GO_Central"/>
</dbReference>
<dbReference type="GO" id="GO:0006954">
    <property type="term" value="P:inflammatory response"/>
    <property type="evidence" value="ECO:0000318"/>
    <property type="project" value="GO_Central"/>
</dbReference>
<dbReference type="GO" id="GO:1903237">
    <property type="term" value="P:negative regulation of leukocyte tethering or rolling"/>
    <property type="evidence" value="ECO:0007669"/>
    <property type="project" value="Ensembl"/>
</dbReference>
<dbReference type="GO" id="GO:0030335">
    <property type="term" value="P:positive regulation of cell migration"/>
    <property type="evidence" value="ECO:0000318"/>
    <property type="project" value="GO_Central"/>
</dbReference>
<dbReference type="GO" id="GO:0001954">
    <property type="term" value="P:positive regulation of cell-matrix adhesion"/>
    <property type="evidence" value="ECO:0007669"/>
    <property type="project" value="Ensembl"/>
</dbReference>
<dbReference type="FunFam" id="2.40.50.40:FF:000026">
    <property type="entry name" value="C-C motif chemokine 25"/>
    <property type="match status" value="1"/>
</dbReference>
<dbReference type="Gene3D" id="2.40.50.40">
    <property type="match status" value="1"/>
</dbReference>
<dbReference type="InterPro" id="IPR039809">
    <property type="entry name" value="Chemokine_b/g/d"/>
</dbReference>
<dbReference type="InterPro" id="IPR001811">
    <property type="entry name" value="Chemokine_IL8-like_dom"/>
</dbReference>
<dbReference type="InterPro" id="IPR036048">
    <property type="entry name" value="Interleukin_8-like_sf"/>
</dbReference>
<dbReference type="PANTHER" id="PTHR12015:SF70">
    <property type="entry name" value="C-C MOTIF CHEMOKINE 25"/>
    <property type="match status" value="1"/>
</dbReference>
<dbReference type="PANTHER" id="PTHR12015">
    <property type="entry name" value="SMALL INDUCIBLE CYTOKINE A"/>
    <property type="match status" value="1"/>
</dbReference>
<dbReference type="Pfam" id="PF00048">
    <property type="entry name" value="IL8"/>
    <property type="match status" value="1"/>
</dbReference>
<dbReference type="SMART" id="SM00199">
    <property type="entry name" value="SCY"/>
    <property type="match status" value="1"/>
</dbReference>
<dbReference type="SUPFAM" id="SSF54117">
    <property type="entry name" value="Interleukin 8-like chemokines"/>
    <property type="match status" value="1"/>
</dbReference>
<feature type="signal peptide" evidence="2">
    <location>
        <begin position="1"/>
        <end position="23"/>
    </location>
</feature>
<feature type="chain" id="PRO_0000231040" description="C-C motif chemokine 25">
    <location>
        <begin position="24"/>
        <end position="151"/>
    </location>
</feature>
<feature type="region of interest" description="Disordered" evidence="3">
    <location>
        <begin position="93"/>
        <end position="151"/>
    </location>
</feature>
<feature type="disulfide bond" evidence="1">
    <location>
        <begin position="30"/>
        <end position="58"/>
    </location>
</feature>
<feature type="disulfide bond" evidence="1">
    <location>
        <begin position="31"/>
        <end position="75"/>
    </location>
</feature>
<proteinExistence type="evidence at transcript level"/>
<gene>
    <name type="primary">CCL25</name>
</gene>
<comment type="function">
    <text evidence="1">Potentially involved in T-cell development. Recombinant protein shows chemotactic activity on thymocytes, macrophages, THP-1 cells, and dendritics cells but is inactive on peripheral blood lymphocytes and neutrophils. Binds to CCR9. Binds to atypical chemokine receptor ACKR4 and mediates the recruitment of beta-arrestin (ARRB1/2) to ACKR4 (By similarity).</text>
</comment>
<comment type="subcellular location">
    <subcellularLocation>
        <location evidence="1">Secreted</location>
    </subcellularLocation>
</comment>
<comment type="similarity">
    <text evidence="4">Belongs to the intercrine beta (chemokine CC) family.</text>
</comment>
<sequence>MRPWLLACLVACFVGAWAPAIHAQGAFEDCCLAYHSHIKWRLLRRAHSYQRQDVSGSCNLPAVIFFFPQKDKMVCGKPGAKWVQFGMKILDNRNKKDSKPHHSGRRFFQGPQSGVRKLSSGTSRPLLLKFSGPTRSSKRKASLLTTAIPGP</sequence>
<protein>
    <recommendedName>
        <fullName>C-C motif chemokine 25</fullName>
    </recommendedName>
    <alternativeName>
        <fullName>Chemokine ligand 25</fullName>
    </alternativeName>
    <alternativeName>
        <fullName>Small-inducible cytokine A25</fullName>
    </alternativeName>
</protein>
<organism>
    <name type="scientific">Sus scrofa</name>
    <name type="common">Pig</name>
    <dbReference type="NCBI Taxonomy" id="9823"/>
    <lineage>
        <taxon>Eukaryota</taxon>
        <taxon>Metazoa</taxon>
        <taxon>Chordata</taxon>
        <taxon>Craniata</taxon>
        <taxon>Vertebrata</taxon>
        <taxon>Euteleostomi</taxon>
        <taxon>Mammalia</taxon>
        <taxon>Eutheria</taxon>
        <taxon>Laurasiatheria</taxon>
        <taxon>Artiodactyla</taxon>
        <taxon>Suina</taxon>
        <taxon>Suidae</taxon>
        <taxon>Sus</taxon>
    </lineage>
</organism>
<evidence type="ECO:0000250" key="1"/>
<evidence type="ECO:0000255" key="2"/>
<evidence type="ECO:0000256" key="3">
    <source>
        <dbReference type="SAM" id="MobiDB-lite"/>
    </source>
</evidence>
<evidence type="ECO:0000305" key="4"/>
<reference key="1">
    <citation type="submission" date="2005-05" db="EMBL/GenBank/DDBJ databases">
        <title>Sus scrofa chemokine (C-C motif) ligand 25 sequence.</title>
        <authorList>
            <person name="Berri M."/>
            <person name="Meurens F."/>
            <person name="Whale J."/>
            <person name="Brownlie R."/>
            <person name="Gerdts V."/>
            <person name="Chevaleyre C."/>
            <person name="Salmon H."/>
        </authorList>
    </citation>
    <scope>NUCLEOTIDE SEQUENCE [MRNA]</scope>
</reference>
<accession>Q4PR21</accession>